<sequence length="470" mass="51556">MGIGRVTQVMGPVIDVRFEHNEVPEINNALHIEVPKEDGALQLTLEVALQLGDDVVRTIAMDSTDGVQRGMEVKDTGRDISVPVGDVTLGRVFNVLGETIDLDEKIDDSVRRDPIHRQAPGFDELSTKVEILETGIKVVDLLAPYIKGGKIGLFGGAGVGKTVLIQELINNIAQEHGGISVFAGVGERTREGNDLYYEMSDSGVIKKTAMVFGQMNEPPGARMRVALSGLTMAEYFRDEEGQDVLLFIDNIFRFTQAGSEVSALLGRMPSAVGYQPTLATEMGQLQERISSTNKGSVTSIQAVFVPADDYTDPAPATTFAHLDSTTNLERKLTEMGIYPAVDPLASTSRALEPSVVGQEHYDVAREVQSTLQKYRELQDIIAILGMDELSDEDKQTVERARRIQFFLSQNFHVAEQFTGQKGSYVPVKTTVADFRDILDGKYDHIPEDAFRLVGSMEDVIEKAKDMGVEV</sequence>
<reference key="1">
    <citation type="journal article" date="2005" name="J. Bacteriol.">
        <title>Insights on evolution of virulence and resistance from the complete genome analysis of an early methicillin-resistant Staphylococcus aureus strain and a biofilm-producing methicillin-resistant Staphylococcus epidermidis strain.</title>
        <authorList>
            <person name="Gill S.R."/>
            <person name="Fouts D.E."/>
            <person name="Archer G.L."/>
            <person name="Mongodin E.F."/>
            <person name="DeBoy R.T."/>
            <person name="Ravel J."/>
            <person name="Paulsen I.T."/>
            <person name="Kolonay J.F."/>
            <person name="Brinkac L.M."/>
            <person name="Beanan M.J."/>
            <person name="Dodson R.J."/>
            <person name="Daugherty S.C."/>
            <person name="Madupu R."/>
            <person name="Angiuoli S.V."/>
            <person name="Durkin A.S."/>
            <person name="Haft D.H."/>
            <person name="Vamathevan J.J."/>
            <person name="Khouri H."/>
            <person name="Utterback T.R."/>
            <person name="Lee C."/>
            <person name="Dimitrov G."/>
            <person name="Jiang L."/>
            <person name="Qin H."/>
            <person name="Weidman J."/>
            <person name="Tran K."/>
            <person name="Kang K.H."/>
            <person name="Hance I.R."/>
            <person name="Nelson K.E."/>
            <person name="Fraser C.M."/>
        </authorList>
    </citation>
    <scope>NUCLEOTIDE SEQUENCE [LARGE SCALE GENOMIC DNA]</scope>
    <source>
        <strain>ATCC 35984 / DSM 28319 / BCRC 17069 / CCUG 31568 / BM 3577 / RP62A</strain>
    </source>
</reference>
<name>ATPB_STAEQ</name>
<feature type="chain" id="PRO_0000144474" description="ATP synthase subunit beta">
    <location>
        <begin position="1"/>
        <end position="470"/>
    </location>
</feature>
<feature type="binding site" evidence="1">
    <location>
        <begin position="155"/>
        <end position="162"/>
    </location>
    <ligand>
        <name>ATP</name>
        <dbReference type="ChEBI" id="CHEBI:30616"/>
    </ligand>
</feature>
<gene>
    <name evidence="1" type="primary">atpD</name>
    <name type="ordered locus">SERP1709</name>
</gene>
<protein>
    <recommendedName>
        <fullName evidence="1">ATP synthase subunit beta</fullName>
        <ecNumber evidence="1">7.1.2.2</ecNumber>
    </recommendedName>
    <alternativeName>
        <fullName evidence="1">ATP synthase F1 sector subunit beta</fullName>
    </alternativeName>
    <alternativeName>
        <fullName evidence="1">F-ATPase subunit beta</fullName>
    </alternativeName>
</protein>
<comment type="function">
    <text evidence="1">Produces ATP from ADP in the presence of a proton gradient across the membrane. The catalytic sites are hosted primarily by the beta subunits.</text>
</comment>
<comment type="catalytic activity">
    <reaction evidence="1">
        <text>ATP + H2O + 4 H(+)(in) = ADP + phosphate + 5 H(+)(out)</text>
        <dbReference type="Rhea" id="RHEA:57720"/>
        <dbReference type="ChEBI" id="CHEBI:15377"/>
        <dbReference type="ChEBI" id="CHEBI:15378"/>
        <dbReference type="ChEBI" id="CHEBI:30616"/>
        <dbReference type="ChEBI" id="CHEBI:43474"/>
        <dbReference type="ChEBI" id="CHEBI:456216"/>
        <dbReference type="EC" id="7.1.2.2"/>
    </reaction>
</comment>
<comment type="subunit">
    <text evidence="1">F-type ATPases have 2 components, CF(1) - the catalytic core - and CF(0) - the membrane proton channel. CF(1) has five subunits: alpha(3), beta(3), gamma(1), delta(1), epsilon(1). CF(0) has three main subunits: a(1), b(2) and c(9-12). The alpha and beta chains form an alternating ring which encloses part of the gamma chain. CF(1) is attached to CF(0) by a central stalk formed by the gamma and epsilon chains, while a peripheral stalk is formed by the delta and b chains.</text>
</comment>
<comment type="subcellular location">
    <subcellularLocation>
        <location evidence="1">Cell membrane</location>
        <topology evidence="1">Peripheral membrane protein</topology>
    </subcellularLocation>
</comment>
<comment type="similarity">
    <text evidence="1">Belongs to the ATPase alpha/beta chains family.</text>
</comment>
<accession>Q5HMB9</accession>
<keyword id="KW-0066">ATP synthesis</keyword>
<keyword id="KW-0067">ATP-binding</keyword>
<keyword id="KW-1003">Cell membrane</keyword>
<keyword id="KW-0139">CF(1)</keyword>
<keyword id="KW-0375">Hydrogen ion transport</keyword>
<keyword id="KW-0406">Ion transport</keyword>
<keyword id="KW-0472">Membrane</keyword>
<keyword id="KW-0547">Nucleotide-binding</keyword>
<keyword id="KW-1185">Reference proteome</keyword>
<keyword id="KW-1278">Translocase</keyword>
<keyword id="KW-0813">Transport</keyword>
<proteinExistence type="inferred from homology"/>
<organism>
    <name type="scientific">Staphylococcus epidermidis (strain ATCC 35984 / DSM 28319 / BCRC 17069 / CCUG 31568 / BM 3577 / RP62A)</name>
    <dbReference type="NCBI Taxonomy" id="176279"/>
    <lineage>
        <taxon>Bacteria</taxon>
        <taxon>Bacillati</taxon>
        <taxon>Bacillota</taxon>
        <taxon>Bacilli</taxon>
        <taxon>Bacillales</taxon>
        <taxon>Staphylococcaceae</taxon>
        <taxon>Staphylococcus</taxon>
    </lineage>
</organism>
<evidence type="ECO:0000255" key="1">
    <source>
        <dbReference type="HAMAP-Rule" id="MF_01347"/>
    </source>
</evidence>
<dbReference type="EC" id="7.1.2.2" evidence="1"/>
<dbReference type="EMBL" id="CP000029">
    <property type="protein sequence ID" value="AAW55095.1"/>
    <property type="molecule type" value="Genomic_DNA"/>
</dbReference>
<dbReference type="RefSeq" id="WP_001829930.1">
    <property type="nucleotide sequence ID" value="NC_002976.3"/>
</dbReference>
<dbReference type="SMR" id="Q5HMB9"/>
<dbReference type="STRING" id="176279.SERP1709"/>
<dbReference type="GeneID" id="50018199"/>
<dbReference type="KEGG" id="ser:SERP1709"/>
<dbReference type="eggNOG" id="COG0055">
    <property type="taxonomic scope" value="Bacteria"/>
</dbReference>
<dbReference type="HOGENOM" id="CLU_022398_0_2_9"/>
<dbReference type="Proteomes" id="UP000000531">
    <property type="component" value="Chromosome"/>
</dbReference>
<dbReference type="GO" id="GO:0005886">
    <property type="term" value="C:plasma membrane"/>
    <property type="evidence" value="ECO:0007669"/>
    <property type="project" value="UniProtKB-SubCell"/>
</dbReference>
<dbReference type="GO" id="GO:0045259">
    <property type="term" value="C:proton-transporting ATP synthase complex"/>
    <property type="evidence" value="ECO:0007669"/>
    <property type="project" value="UniProtKB-KW"/>
</dbReference>
<dbReference type="GO" id="GO:0005524">
    <property type="term" value="F:ATP binding"/>
    <property type="evidence" value="ECO:0007669"/>
    <property type="project" value="UniProtKB-UniRule"/>
</dbReference>
<dbReference type="GO" id="GO:0016887">
    <property type="term" value="F:ATP hydrolysis activity"/>
    <property type="evidence" value="ECO:0007669"/>
    <property type="project" value="InterPro"/>
</dbReference>
<dbReference type="GO" id="GO:0046933">
    <property type="term" value="F:proton-transporting ATP synthase activity, rotational mechanism"/>
    <property type="evidence" value="ECO:0007669"/>
    <property type="project" value="UniProtKB-UniRule"/>
</dbReference>
<dbReference type="CDD" id="cd18110">
    <property type="entry name" value="ATP-synt_F1_beta_C"/>
    <property type="match status" value="1"/>
</dbReference>
<dbReference type="CDD" id="cd18115">
    <property type="entry name" value="ATP-synt_F1_beta_N"/>
    <property type="match status" value="1"/>
</dbReference>
<dbReference type="CDD" id="cd01133">
    <property type="entry name" value="F1-ATPase_beta_CD"/>
    <property type="match status" value="1"/>
</dbReference>
<dbReference type="FunFam" id="1.10.1140.10:FF:000001">
    <property type="entry name" value="ATP synthase subunit beta"/>
    <property type="match status" value="1"/>
</dbReference>
<dbReference type="FunFam" id="2.40.10.170:FF:000005">
    <property type="entry name" value="ATP synthase subunit beta"/>
    <property type="match status" value="1"/>
</dbReference>
<dbReference type="FunFam" id="3.40.50.300:FF:000004">
    <property type="entry name" value="ATP synthase subunit beta"/>
    <property type="match status" value="1"/>
</dbReference>
<dbReference type="Gene3D" id="2.40.10.170">
    <property type="match status" value="1"/>
</dbReference>
<dbReference type="Gene3D" id="1.10.1140.10">
    <property type="entry name" value="Bovine Mitochondrial F1-atpase, Atp Synthase Beta Chain, Chain D, domain 3"/>
    <property type="match status" value="1"/>
</dbReference>
<dbReference type="Gene3D" id="3.40.50.300">
    <property type="entry name" value="P-loop containing nucleotide triphosphate hydrolases"/>
    <property type="match status" value="1"/>
</dbReference>
<dbReference type="HAMAP" id="MF_01347">
    <property type="entry name" value="ATP_synth_beta_bact"/>
    <property type="match status" value="1"/>
</dbReference>
<dbReference type="InterPro" id="IPR003593">
    <property type="entry name" value="AAA+_ATPase"/>
</dbReference>
<dbReference type="InterPro" id="IPR055190">
    <property type="entry name" value="ATP-synt_VA_C"/>
</dbReference>
<dbReference type="InterPro" id="IPR005722">
    <property type="entry name" value="ATP_synth_F1_bsu"/>
</dbReference>
<dbReference type="InterPro" id="IPR020003">
    <property type="entry name" value="ATPase_a/bsu_AS"/>
</dbReference>
<dbReference type="InterPro" id="IPR050053">
    <property type="entry name" value="ATPase_alpha/beta_chains"/>
</dbReference>
<dbReference type="InterPro" id="IPR004100">
    <property type="entry name" value="ATPase_F1/V1/A1_a/bsu_N"/>
</dbReference>
<dbReference type="InterPro" id="IPR036121">
    <property type="entry name" value="ATPase_F1/V1/A1_a/bsu_N_sf"/>
</dbReference>
<dbReference type="InterPro" id="IPR000194">
    <property type="entry name" value="ATPase_F1/V1/A1_a/bsu_nucl-bd"/>
</dbReference>
<dbReference type="InterPro" id="IPR024034">
    <property type="entry name" value="ATPase_F1/V1_b/a_C"/>
</dbReference>
<dbReference type="InterPro" id="IPR027417">
    <property type="entry name" value="P-loop_NTPase"/>
</dbReference>
<dbReference type="NCBIfam" id="TIGR01039">
    <property type="entry name" value="atpD"/>
    <property type="match status" value="1"/>
</dbReference>
<dbReference type="PANTHER" id="PTHR15184">
    <property type="entry name" value="ATP SYNTHASE"/>
    <property type="match status" value="1"/>
</dbReference>
<dbReference type="PANTHER" id="PTHR15184:SF71">
    <property type="entry name" value="ATP SYNTHASE SUBUNIT BETA, MITOCHONDRIAL"/>
    <property type="match status" value="1"/>
</dbReference>
<dbReference type="Pfam" id="PF00006">
    <property type="entry name" value="ATP-synt_ab"/>
    <property type="match status" value="1"/>
</dbReference>
<dbReference type="Pfam" id="PF02874">
    <property type="entry name" value="ATP-synt_ab_N"/>
    <property type="match status" value="1"/>
</dbReference>
<dbReference type="Pfam" id="PF22919">
    <property type="entry name" value="ATP-synt_VA_C"/>
    <property type="match status" value="1"/>
</dbReference>
<dbReference type="SMART" id="SM00382">
    <property type="entry name" value="AAA"/>
    <property type="match status" value="1"/>
</dbReference>
<dbReference type="SUPFAM" id="SSF47917">
    <property type="entry name" value="C-terminal domain of alpha and beta subunits of F1 ATP synthase"/>
    <property type="match status" value="1"/>
</dbReference>
<dbReference type="SUPFAM" id="SSF50615">
    <property type="entry name" value="N-terminal domain of alpha and beta subunits of F1 ATP synthase"/>
    <property type="match status" value="1"/>
</dbReference>
<dbReference type="SUPFAM" id="SSF52540">
    <property type="entry name" value="P-loop containing nucleoside triphosphate hydrolases"/>
    <property type="match status" value="1"/>
</dbReference>
<dbReference type="PROSITE" id="PS00152">
    <property type="entry name" value="ATPASE_ALPHA_BETA"/>
    <property type="match status" value="1"/>
</dbReference>